<keyword id="KW-0021">Allosteric enzyme</keyword>
<keyword id="KW-0328">Glycosyltransferase</keyword>
<keyword id="KW-0342">GTP-binding</keyword>
<keyword id="KW-0460">Magnesium</keyword>
<keyword id="KW-0547">Nucleotide-binding</keyword>
<keyword id="KW-0808">Transferase</keyword>
<gene>
    <name evidence="1" type="primary">upp</name>
    <name type="ordered locus">CLJ_B0183</name>
</gene>
<sequence>MSKVTQIAHPLILHKLALIRDKNTGSKDFRELVEEVAMLMAYEVTRDLQLKEVEIETPICKTKCKMLSGKKVAIVPILRAGLGMVGGMTSLIPAAKVGHIGLYRDEETLKPVEYFCKLPQDIGDRDVIVTDPMLATGGSAKDAITLLKQKGAKHIRLMCLVAAPEGIKEVMDEHPDVDIYVASVDEKLNEKGYVVPGLGDAGDRLYGTK</sequence>
<organism>
    <name type="scientific">Clostridium botulinum (strain 657 / Type Ba4)</name>
    <dbReference type="NCBI Taxonomy" id="515621"/>
    <lineage>
        <taxon>Bacteria</taxon>
        <taxon>Bacillati</taxon>
        <taxon>Bacillota</taxon>
        <taxon>Clostridia</taxon>
        <taxon>Eubacteriales</taxon>
        <taxon>Clostridiaceae</taxon>
        <taxon>Clostridium</taxon>
    </lineage>
</organism>
<protein>
    <recommendedName>
        <fullName evidence="1">Uracil phosphoribosyltransferase</fullName>
        <ecNumber evidence="1">2.4.2.9</ecNumber>
    </recommendedName>
    <alternativeName>
        <fullName evidence="1">UMP pyrophosphorylase</fullName>
    </alternativeName>
    <alternativeName>
        <fullName evidence="1">UPRTase</fullName>
    </alternativeName>
</protein>
<feature type="chain" id="PRO_1000213924" description="Uracil phosphoribosyltransferase">
    <location>
        <begin position="1"/>
        <end position="209"/>
    </location>
</feature>
<feature type="binding site" evidence="1">
    <location>
        <position position="79"/>
    </location>
    <ligand>
        <name>5-phospho-alpha-D-ribose 1-diphosphate</name>
        <dbReference type="ChEBI" id="CHEBI:58017"/>
    </ligand>
</feature>
<feature type="binding site" evidence="1">
    <location>
        <position position="104"/>
    </location>
    <ligand>
        <name>5-phospho-alpha-D-ribose 1-diphosphate</name>
        <dbReference type="ChEBI" id="CHEBI:58017"/>
    </ligand>
</feature>
<feature type="binding site" evidence="1">
    <location>
        <begin position="131"/>
        <end position="139"/>
    </location>
    <ligand>
        <name>5-phospho-alpha-D-ribose 1-diphosphate</name>
        <dbReference type="ChEBI" id="CHEBI:58017"/>
    </ligand>
</feature>
<feature type="binding site" evidence="1">
    <location>
        <position position="194"/>
    </location>
    <ligand>
        <name>uracil</name>
        <dbReference type="ChEBI" id="CHEBI:17568"/>
    </ligand>
</feature>
<feature type="binding site" evidence="1">
    <location>
        <begin position="199"/>
        <end position="201"/>
    </location>
    <ligand>
        <name>uracil</name>
        <dbReference type="ChEBI" id="CHEBI:17568"/>
    </ligand>
</feature>
<feature type="binding site" evidence="1">
    <location>
        <position position="200"/>
    </location>
    <ligand>
        <name>5-phospho-alpha-D-ribose 1-diphosphate</name>
        <dbReference type="ChEBI" id="CHEBI:58017"/>
    </ligand>
</feature>
<proteinExistence type="inferred from homology"/>
<dbReference type="EC" id="2.4.2.9" evidence="1"/>
<dbReference type="EMBL" id="CP001083">
    <property type="protein sequence ID" value="ACQ54424.1"/>
    <property type="molecule type" value="Genomic_DNA"/>
</dbReference>
<dbReference type="RefSeq" id="WP_003360558.1">
    <property type="nucleotide sequence ID" value="NC_012658.1"/>
</dbReference>
<dbReference type="SMR" id="C3KYI1"/>
<dbReference type="GeneID" id="5184400"/>
<dbReference type="KEGG" id="cbi:CLJ_B0183"/>
<dbReference type="HOGENOM" id="CLU_067096_2_2_9"/>
<dbReference type="UniPathway" id="UPA00574">
    <property type="reaction ID" value="UER00636"/>
</dbReference>
<dbReference type="Proteomes" id="UP000002333">
    <property type="component" value="Chromosome"/>
</dbReference>
<dbReference type="GO" id="GO:0005525">
    <property type="term" value="F:GTP binding"/>
    <property type="evidence" value="ECO:0007669"/>
    <property type="project" value="UniProtKB-KW"/>
</dbReference>
<dbReference type="GO" id="GO:0000287">
    <property type="term" value="F:magnesium ion binding"/>
    <property type="evidence" value="ECO:0007669"/>
    <property type="project" value="UniProtKB-UniRule"/>
</dbReference>
<dbReference type="GO" id="GO:0004845">
    <property type="term" value="F:uracil phosphoribosyltransferase activity"/>
    <property type="evidence" value="ECO:0007669"/>
    <property type="project" value="UniProtKB-UniRule"/>
</dbReference>
<dbReference type="GO" id="GO:0044206">
    <property type="term" value="P:UMP salvage"/>
    <property type="evidence" value="ECO:0007669"/>
    <property type="project" value="UniProtKB-UniRule"/>
</dbReference>
<dbReference type="GO" id="GO:0006223">
    <property type="term" value="P:uracil salvage"/>
    <property type="evidence" value="ECO:0007669"/>
    <property type="project" value="InterPro"/>
</dbReference>
<dbReference type="CDD" id="cd06223">
    <property type="entry name" value="PRTases_typeI"/>
    <property type="match status" value="1"/>
</dbReference>
<dbReference type="FunFam" id="3.40.50.2020:FF:000003">
    <property type="entry name" value="Uracil phosphoribosyltransferase"/>
    <property type="match status" value="1"/>
</dbReference>
<dbReference type="Gene3D" id="3.40.50.2020">
    <property type="match status" value="1"/>
</dbReference>
<dbReference type="HAMAP" id="MF_01218_B">
    <property type="entry name" value="Upp_B"/>
    <property type="match status" value="1"/>
</dbReference>
<dbReference type="InterPro" id="IPR000836">
    <property type="entry name" value="PRibTrfase_dom"/>
</dbReference>
<dbReference type="InterPro" id="IPR029057">
    <property type="entry name" value="PRTase-like"/>
</dbReference>
<dbReference type="InterPro" id="IPR034332">
    <property type="entry name" value="Upp_B"/>
</dbReference>
<dbReference type="InterPro" id="IPR050054">
    <property type="entry name" value="UPRTase/APRTase"/>
</dbReference>
<dbReference type="InterPro" id="IPR005765">
    <property type="entry name" value="Ura_phspho_trans"/>
</dbReference>
<dbReference type="NCBIfam" id="NF001097">
    <property type="entry name" value="PRK00129.1"/>
    <property type="match status" value="1"/>
</dbReference>
<dbReference type="NCBIfam" id="TIGR01091">
    <property type="entry name" value="upp"/>
    <property type="match status" value="1"/>
</dbReference>
<dbReference type="PANTHER" id="PTHR32315">
    <property type="entry name" value="ADENINE PHOSPHORIBOSYLTRANSFERASE"/>
    <property type="match status" value="1"/>
</dbReference>
<dbReference type="PANTHER" id="PTHR32315:SF4">
    <property type="entry name" value="URACIL PHOSPHORIBOSYLTRANSFERASE, CHLOROPLASTIC"/>
    <property type="match status" value="1"/>
</dbReference>
<dbReference type="Pfam" id="PF14681">
    <property type="entry name" value="UPRTase"/>
    <property type="match status" value="1"/>
</dbReference>
<dbReference type="SUPFAM" id="SSF53271">
    <property type="entry name" value="PRTase-like"/>
    <property type="match status" value="1"/>
</dbReference>
<evidence type="ECO:0000255" key="1">
    <source>
        <dbReference type="HAMAP-Rule" id="MF_01218"/>
    </source>
</evidence>
<comment type="function">
    <text evidence="1">Catalyzes the conversion of uracil and 5-phospho-alpha-D-ribose 1-diphosphate (PRPP) to UMP and diphosphate.</text>
</comment>
<comment type="catalytic activity">
    <reaction evidence="1">
        <text>UMP + diphosphate = 5-phospho-alpha-D-ribose 1-diphosphate + uracil</text>
        <dbReference type="Rhea" id="RHEA:13017"/>
        <dbReference type="ChEBI" id="CHEBI:17568"/>
        <dbReference type="ChEBI" id="CHEBI:33019"/>
        <dbReference type="ChEBI" id="CHEBI:57865"/>
        <dbReference type="ChEBI" id="CHEBI:58017"/>
        <dbReference type="EC" id="2.4.2.9"/>
    </reaction>
</comment>
<comment type="cofactor">
    <cofactor evidence="1">
        <name>Mg(2+)</name>
        <dbReference type="ChEBI" id="CHEBI:18420"/>
    </cofactor>
    <text evidence="1">Binds 1 Mg(2+) ion per subunit. The magnesium is bound as Mg-PRPP.</text>
</comment>
<comment type="activity regulation">
    <text evidence="1">Allosterically activated by GTP.</text>
</comment>
<comment type="pathway">
    <text evidence="1">Pyrimidine metabolism; UMP biosynthesis via salvage pathway; UMP from uracil: step 1/1.</text>
</comment>
<comment type="similarity">
    <text evidence="1">Belongs to the UPRTase family.</text>
</comment>
<reference key="1">
    <citation type="submission" date="2008-05" db="EMBL/GenBank/DDBJ databases">
        <title>Genome sequence of Clostridium botulinum Ba4 strain 657.</title>
        <authorList>
            <person name="Shrivastava S."/>
            <person name="Brown J.L."/>
            <person name="Bruce D."/>
            <person name="Detter C."/>
            <person name="Munk C."/>
            <person name="Smith L.A."/>
            <person name="Smith T.J."/>
            <person name="Sutton G."/>
            <person name="Brettin T.S."/>
        </authorList>
    </citation>
    <scope>NUCLEOTIDE SEQUENCE [LARGE SCALE GENOMIC DNA]</scope>
    <source>
        <strain>657 / Type Ba4</strain>
    </source>
</reference>
<name>UPP_CLOB6</name>
<accession>C3KYI1</accession>